<proteinExistence type="inferred from homology"/>
<feature type="chain" id="PRO_0000060167" description="Peptide transport system permease protein SapC">
    <location>
        <begin position="1"/>
        <end position="296"/>
    </location>
</feature>
<feature type="topological domain" description="Cytoplasmic" evidence="2">
    <location>
        <begin position="1"/>
        <end position="28"/>
    </location>
</feature>
<feature type="transmembrane region" description="Helical" evidence="3">
    <location>
        <begin position="29"/>
        <end position="49"/>
    </location>
</feature>
<feature type="topological domain" description="Periplasmic" evidence="2">
    <location>
        <begin position="50"/>
        <end position="98"/>
    </location>
</feature>
<feature type="transmembrane region" description="Helical" evidence="3">
    <location>
        <begin position="99"/>
        <end position="119"/>
    </location>
</feature>
<feature type="topological domain" description="Cytoplasmic" evidence="2">
    <location>
        <begin position="120"/>
        <end position="133"/>
    </location>
</feature>
<feature type="transmembrane region" description="Helical" evidence="3">
    <location>
        <begin position="134"/>
        <end position="154"/>
    </location>
</feature>
<feature type="topological domain" description="Periplasmic" evidence="2">
    <location>
        <begin position="155"/>
        <end position="196"/>
    </location>
</feature>
<feature type="transmembrane region" description="Helical" evidence="3">
    <location>
        <begin position="197"/>
        <end position="217"/>
    </location>
</feature>
<feature type="topological domain" description="Cytoplasmic" evidence="2">
    <location>
        <begin position="218"/>
        <end position="222"/>
    </location>
</feature>
<feature type="transmembrane region" description="Helical" evidence="3">
    <location>
        <begin position="223"/>
        <end position="243"/>
    </location>
</feature>
<feature type="topological domain" description="Periplasmic" evidence="2">
    <location>
        <begin position="244"/>
        <end position="257"/>
    </location>
</feature>
<feature type="transmembrane region" description="Helical" evidence="3">
    <location>
        <begin position="258"/>
        <end position="278"/>
    </location>
</feature>
<feature type="topological domain" description="Cytoplasmic" evidence="2">
    <location>
        <begin position="279"/>
        <end position="296"/>
    </location>
</feature>
<feature type="domain" description="ABC transmembrane type-1" evidence="3">
    <location>
        <begin position="99"/>
        <end position="284"/>
    </location>
</feature>
<accession>P0AGH7</accession>
<accession>Q47624</accession>
<protein>
    <recommendedName>
        <fullName>Peptide transport system permease protein SapC</fullName>
    </recommendedName>
</protein>
<dbReference type="EMBL" id="AE005674">
    <property type="protein sequence ID" value="AAN42908.1"/>
    <property type="molecule type" value="Genomic_DNA"/>
</dbReference>
<dbReference type="EMBL" id="AE014073">
    <property type="protein sequence ID" value="AAP16791.1"/>
    <property type="molecule type" value="Genomic_DNA"/>
</dbReference>
<dbReference type="RefSeq" id="NP_707201.1">
    <property type="nucleotide sequence ID" value="NC_004337.2"/>
</dbReference>
<dbReference type="RefSeq" id="WP_001146163.1">
    <property type="nucleotide sequence ID" value="NZ_WPGW01000009.1"/>
</dbReference>
<dbReference type="SMR" id="P0AGH7"/>
<dbReference type="STRING" id="198214.SF1297"/>
<dbReference type="PaxDb" id="198214-SF1297"/>
<dbReference type="GeneID" id="1024270"/>
<dbReference type="GeneID" id="93775417"/>
<dbReference type="KEGG" id="sfl:SF1297"/>
<dbReference type="KEGG" id="sfx:S1379"/>
<dbReference type="PATRIC" id="fig|198214.7.peg.1523"/>
<dbReference type="HOGENOM" id="CLU_028518_1_1_6"/>
<dbReference type="Proteomes" id="UP000001006">
    <property type="component" value="Chromosome"/>
</dbReference>
<dbReference type="Proteomes" id="UP000002673">
    <property type="component" value="Chromosome"/>
</dbReference>
<dbReference type="GO" id="GO:0005886">
    <property type="term" value="C:plasma membrane"/>
    <property type="evidence" value="ECO:0007669"/>
    <property type="project" value="UniProtKB-SubCell"/>
</dbReference>
<dbReference type="GO" id="GO:0015833">
    <property type="term" value="P:peptide transport"/>
    <property type="evidence" value="ECO:0007669"/>
    <property type="project" value="UniProtKB-KW"/>
</dbReference>
<dbReference type="GO" id="GO:0015031">
    <property type="term" value="P:protein transport"/>
    <property type="evidence" value="ECO:0007669"/>
    <property type="project" value="UniProtKB-KW"/>
</dbReference>
<dbReference type="GO" id="GO:0055085">
    <property type="term" value="P:transmembrane transport"/>
    <property type="evidence" value="ECO:0007669"/>
    <property type="project" value="InterPro"/>
</dbReference>
<dbReference type="CDD" id="cd06261">
    <property type="entry name" value="TM_PBP2"/>
    <property type="match status" value="1"/>
</dbReference>
<dbReference type="FunFam" id="1.10.3720.10:FF:000019">
    <property type="entry name" value="Antimicrobial peptide ABC transporter permease SapC"/>
    <property type="match status" value="1"/>
</dbReference>
<dbReference type="Gene3D" id="1.10.3720.10">
    <property type="entry name" value="MetI-like"/>
    <property type="match status" value="1"/>
</dbReference>
<dbReference type="InterPro" id="IPR050366">
    <property type="entry name" value="BP-dependent_transpt_permease"/>
</dbReference>
<dbReference type="InterPro" id="IPR000515">
    <property type="entry name" value="MetI-like"/>
</dbReference>
<dbReference type="InterPro" id="IPR035906">
    <property type="entry name" value="MetI-like_sf"/>
</dbReference>
<dbReference type="InterPro" id="IPR025966">
    <property type="entry name" value="OppC_N"/>
</dbReference>
<dbReference type="NCBIfam" id="NF011691">
    <property type="entry name" value="PRK15111.1"/>
    <property type="match status" value="1"/>
</dbReference>
<dbReference type="PANTHER" id="PTHR43386">
    <property type="entry name" value="OLIGOPEPTIDE TRANSPORT SYSTEM PERMEASE PROTEIN APPC"/>
    <property type="match status" value="1"/>
</dbReference>
<dbReference type="PANTHER" id="PTHR43386:SF5">
    <property type="entry name" value="PUTRESCINE EXPORT SYSTEM PERMEASE PROTEIN SAPC"/>
    <property type="match status" value="1"/>
</dbReference>
<dbReference type="Pfam" id="PF00528">
    <property type="entry name" value="BPD_transp_1"/>
    <property type="match status" value="1"/>
</dbReference>
<dbReference type="Pfam" id="PF12911">
    <property type="entry name" value="OppC_N"/>
    <property type="match status" value="1"/>
</dbReference>
<dbReference type="SUPFAM" id="SSF161098">
    <property type="entry name" value="MetI-like"/>
    <property type="match status" value="1"/>
</dbReference>
<dbReference type="PROSITE" id="PS50928">
    <property type="entry name" value="ABC_TM1"/>
    <property type="match status" value="1"/>
</dbReference>
<organism>
    <name type="scientific">Shigella flexneri</name>
    <dbReference type="NCBI Taxonomy" id="623"/>
    <lineage>
        <taxon>Bacteria</taxon>
        <taxon>Pseudomonadati</taxon>
        <taxon>Pseudomonadota</taxon>
        <taxon>Gammaproteobacteria</taxon>
        <taxon>Enterobacterales</taxon>
        <taxon>Enterobacteriaceae</taxon>
        <taxon>Shigella</taxon>
    </lineage>
</organism>
<comment type="function">
    <text evidence="1">Involved in a peptide intake transport system that plays a role in the resistance to antimicrobial peptides.</text>
</comment>
<comment type="subcellular location">
    <subcellularLocation>
        <location evidence="1">Cell inner membrane</location>
        <topology evidence="3">Multi-pass membrane protein</topology>
    </subcellularLocation>
</comment>
<comment type="similarity">
    <text evidence="4">Belongs to the binding-protein-dependent transport system permease family. OppBC subfamily.</text>
</comment>
<evidence type="ECO:0000250" key="1"/>
<evidence type="ECO:0000255" key="2"/>
<evidence type="ECO:0000255" key="3">
    <source>
        <dbReference type="PROSITE-ProRule" id="PRU00441"/>
    </source>
</evidence>
<evidence type="ECO:0000305" key="4"/>
<keyword id="KW-0997">Cell inner membrane</keyword>
<keyword id="KW-1003">Cell membrane</keyword>
<keyword id="KW-0472">Membrane</keyword>
<keyword id="KW-0571">Peptide transport</keyword>
<keyword id="KW-0653">Protein transport</keyword>
<keyword id="KW-1185">Reference proteome</keyword>
<keyword id="KW-0812">Transmembrane</keyword>
<keyword id="KW-1133">Transmembrane helix</keyword>
<keyword id="KW-0813">Transport</keyword>
<name>SAPC_SHIFL</name>
<reference key="1">
    <citation type="journal article" date="2002" name="Nucleic Acids Res.">
        <title>Genome sequence of Shigella flexneri 2a: insights into pathogenicity through comparison with genomes of Escherichia coli K12 and O157.</title>
        <authorList>
            <person name="Jin Q."/>
            <person name="Yuan Z."/>
            <person name="Xu J."/>
            <person name="Wang Y."/>
            <person name="Shen Y."/>
            <person name="Lu W."/>
            <person name="Wang J."/>
            <person name="Liu H."/>
            <person name="Yang J."/>
            <person name="Yang F."/>
            <person name="Zhang X."/>
            <person name="Zhang J."/>
            <person name="Yang G."/>
            <person name="Wu H."/>
            <person name="Qu D."/>
            <person name="Dong J."/>
            <person name="Sun L."/>
            <person name="Xue Y."/>
            <person name="Zhao A."/>
            <person name="Gao Y."/>
            <person name="Zhu J."/>
            <person name="Kan B."/>
            <person name="Ding K."/>
            <person name="Chen S."/>
            <person name="Cheng H."/>
            <person name="Yao Z."/>
            <person name="He B."/>
            <person name="Chen R."/>
            <person name="Ma D."/>
            <person name="Qiang B."/>
            <person name="Wen Y."/>
            <person name="Hou Y."/>
            <person name="Yu J."/>
        </authorList>
    </citation>
    <scope>NUCLEOTIDE SEQUENCE [LARGE SCALE GENOMIC DNA]</scope>
    <source>
        <strain>301 / Serotype 2a</strain>
    </source>
</reference>
<reference key="2">
    <citation type="journal article" date="2003" name="Infect. Immun.">
        <title>Complete genome sequence and comparative genomics of Shigella flexneri serotype 2a strain 2457T.</title>
        <authorList>
            <person name="Wei J."/>
            <person name="Goldberg M.B."/>
            <person name="Burland V."/>
            <person name="Venkatesan M.M."/>
            <person name="Deng W."/>
            <person name="Fournier G."/>
            <person name="Mayhew G.F."/>
            <person name="Plunkett G. III"/>
            <person name="Rose D.J."/>
            <person name="Darling A."/>
            <person name="Mau B."/>
            <person name="Perna N.T."/>
            <person name="Payne S.M."/>
            <person name="Runyen-Janecky L.J."/>
            <person name="Zhou S."/>
            <person name="Schwartz D.C."/>
            <person name="Blattner F.R."/>
        </authorList>
    </citation>
    <scope>NUCLEOTIDE SEQUENCE [LARGE SCALE GENOMIC DNA]</scope>
    <source>
        <strain>ATCC 700930 / 2457T / Serotype 2a</strain>
    </source>
</reference>
<gene>
    <name type="primary">sapC</name>
    <name type="ordered locus">SF1297</name>
    <name type="ordered locus">S1379</name>
</gene>
<sequence length="296" mass="31548">MPYDSVYSEKRPPGTLRTAWRKFYSDASAMVGLYGCAGLAVLCIFGGWFAPYGIDQQFLGYQLLPPSWSRYGEVSFFLGTDDLGRDVLSRLLSGAAPTVGGAFVVTLAATICGLVLGTFAGATHGLRSAVLNHILDTLLAIPSLLLAIIVVAFAGPSLSHAMFAVWLALLPRMVRSIYSMVHDELEKEYVIAARLDGASTLNILWFAVMPNITAGLVTEITRALSMAILDIAALGFLDLGAQLPSPEWGAMLGDALELIYVAPWTVMLPGAAIMISVLLVNLLGDGVRRAIIAGVE</sequence>